<evidence type="ECO:0000250" key="1"/>
<evidence type="ECO:0000305" key="2"/>
<reference key="1">
    <citation type="journal article" date="1993" name="J. Bacteriol.">
        <title>Identification of Mycoplasma pirum genes involved in the salvage pathways for nucleosides.</title>
        <authorList>
            <person name="Tham T.N."/>
            <person name="Ferris S."/>
            <person name="Kovacic R."/>
            <person name="Montagnier L."/>
            <person name="Blanchard A."/>
        </authorList>
    </citation>
    <scope>NUCLEOTIDE SEQUENCE [GENOMIC DNA]</scope>
    <source>
        <strain>BER</strain>
    </source>
</reference>
<organism>
    <name type="scientific">Mycoplasmoides pirum</name>
    <name type="common">Mycoplasma pirum</name>
    <dbReference type="NCBI Taxonomy" id="2122"/>
    <lineage>
        <taxon>Bacteria</taxon>
        <taxon>Bacillati</taxon>
        <taxon>Mycoplasmatota</taxon>
        <taxon>Mycoplasmoidales</taxon>
        <taxon>Mycoplasmoidaceae</taxon>
        <taxon>Mycoplasmoides</taxon>
    </lineage>
</organism>
<proteinExistence type="inferred from homology"/>
<accession>P47723</accession>
<keyword id="KW-0413">Isomerase</keyword>
<keyword id="KW-0460">Magnesium</keyword>
<keyword id="KW-0479">Metal-binding</keyword>
<keyword id="KW-0597">Phosphoprotein</keyword>
<dbReference type="EC" id="5.4.2.8"/>
<dbReference type="EMBL" id="L13289">
    <property type="protein sequence ID" value="AAA25434.1"/>
    <property type="molecule type" value="Genomic_DNA"/>
</dbReference>
<dbReference type="PIR" id="E53312">
    <property type="entry name" value="E53312"/>
</dbReference>
<dbReference type="SMR" id="P47723"/>
<dbReference type="GO" id="GO:0000287">
    <property type="term" value="F:magnesium ion binding"/>
    <property type="evidence" value="ECO:0007669"/>
    <property type="project" value="InterPro"/>
</dbReference>
<dbReference type="GO" id="GO:0004615">
    <property type="term" value="F:phosphomannomutase activity"/>
    <property type="evidence" value="ECO:0007669"/>
    <property type="project" value="UniProtKB-EC"/>
</dbReference>
<dbReference type="GO" id="GO:0008973">
    <property type="term" value="F:phosphopentomutase activity"/>
    <property type="evidence" value="ECO:0007669"/>
    <property type="project" value="TreeGrafter"/>
</dbReference>
<dbReference type="GO" id="GO:0005975">
    <property type="term" value="P:carbohydrate metabolic process"/>
    <property type="evidence" value="ECO:0007669"/>
    <property type="project" value="InterPro"/>
</dbReference>
<dbReference type="GO" id="GO:0006166">
    <property type="term" value="P:purine ribonucleoside salvage"/>
    <property type="evidence" value="ECO:0007669"/>
    <property type="project" value="TreeGrafter"/>
</dbReference>
<dbReference type="CDD" id="cd05799">
    <property type="entry name" value="PGM2"/>
    <property type="match status" value="1"/>
</dbReference>
<dbReference type="Gene3D" id="3.40.120.10">
    <property type="entry name" value="Alpha-D-Glucose-1,6-Bisphosphate, subunit A, domain 3"/>
    <property type="match status" value="3"/>
</dbReference>
<dbReference type="Gene3D" id="3.30.310.50">
    <property type="entry name" value="Alpha-D-phosphohexomutase, C-terminal domain"/>
    <property type="match status" value="1"/>
</dbReference>
<dbReference type="InterPro" id="IPR005844">
    <property type="entry name" value="A-D-PHexomutase_a/b/a-I"/>
</dbReference>
<dbReference type="InterPro" id="IPR016055">
    <property type="entry name" value="A-D-PHexomutase_a/b/a-I/II/III"/>
</dbReference>
<dbReference type="InterPro" id="IPR005845">
    <property type="entry name" value="A-D-PHexomutase_a/b/a-II"/>
</dbReference>
<dbReference type="InterPro" id="IPR005846">
    <property type="entry name" value="A-D-PHexomutase_a/b/a-III"/>
</dbReference>
<dbReference type="InterPro" id="IPR036900">
    <property type="entry name" value="A-D-PHexomutase_C_sf"/>
</dbReference>
<dbReference type="InterPro" id="IPR016066">
    <property type="entry name" value="A-D-PHexomutase_CS"/>
</dbReference>
<dbReference type="PANTHER" id="PTHR45745:SF1">
    <property type="entry name" value="PHOSPHOGLUCOMUTASE 2B-RELATED"/>
    <property type="match status" value="1"/>
</dbReference>
<dbReference type="PANTHER" id="PTHR45745">
    <property type="entry name" value="PHOSPHOMANNOMUTASE 45A"/>
    <property type="match status" value="1"/>
</dbReference>
<dbReference type="Pfam" id="PF02878">
    <property type="entry name" value="PGM_PMM_I"/>
    <property type="match status" value="1"/>
</dbReference>
<dbReference type="Pfam" id="PF02879">
    <property type="entry name" value="PGM_PMM_II"/>
    <property type="match status" value="1"/>
</dbReference>
<dbReference type="Pfam" id="PF02880">
    <property type="entry name" value="PGM_PMM_III"/>
    <property type="match status" value="1"/>
</dbReference>
<dbReference type="SUPFAM" id="SSF55957">
    <property type="entry name" value="Phosphoglucomutase, C-terminal domain"/>
    <property type="match status" value="1"/>
</dbReference>
<dbReference type="SUPFAM" id="SSF53738">
    <property type="entry name" value="Phosphoglucomutase, first 3 domains"/>
    <property type="match status" value="3"/>
</dbReference>
<dbReference type="PROSITE" id="PS00710">
    <property type="entry name" value="PGM_PMM"/>
    <property type="match status" value="1"/>
</dbReference>
<feature type="chain" id="PRO_0000147829" description="Phosphomannomutase">
    <location>
        <begin position="1"/>
        <end position="544"/>
    </location>
</feature>
<feature type="active site" description="Phosphoserine intermediate" evidence="1">
    <location>
        <position position="145"/>
    </location>
</feature>
<feature type="binding site" description="via phosphate group" evidence="1">
    <location>
        <position position="145"/>
    </location>
    <ligand>
        <name>Mg(2+)</name>
        <dbReference type="ChEBI" id="CHEBI:18420"/>
    </ligand>
</feature>
<feature type="binding site" evidence="1">
    <location>
        <position position="297"/>
    </location>
    <ligand>
        <name>Mg(2+)</name>
        <dbReference type="ChEBI" id="CHEBI:18420"/>
    </ligand>
</feature>
<feature type="binding site" evidence="1">
    <location>
        <position position="299"/>
    </location>
    <ligand>
        <name>Mg(2+)</name>
        <dbReference type="ChEBI" id="CHEBI:18420"/>
    </ligand>
</feature>
<feature type="binding site" evidence="1">
    <location>
        <position position="301"/>
    </location>
    <ligand>
        <name>Mg(2+)</name>
        <dbReference type="ChEBI" id="CHEBI:18420"/>
    </ligand>
</feature>
<comment type="catalytic activity">
    <reaction>
        <text>alpha-D-mannose 1-phosphate = D-mannose 6-phosphate</text>
        <dbReference type="Rhea" id="RHEA:11140"/>
        <dbReference type="ChEBI" id="CHEBI:58409"/>
        <dbReference type="ChEBI" id="CHEBI:58735"/>
        <dbReference type="EC" id="5.4.2.8"/>
    </reaction>
</comment>
<comment type="cofactor">
    <cofactor evidence="1">
        <name>Mg(2+)</name>
        <dbReference type="ChEBI" id="CHEBI:18420"/>
    </cofactor>
    <text evidence="1">Binds 1 Mg(2+) ion per subunit.</text>
</comment>
<comment type="similarity">
    <text evidence="2">Belongs to the phosphohexose mutase family.</text>
</comment>
<protein>
    <recommendedName>
        <fullName>Phosphomannomutase</fullName>
        <shortName>PMM</shortName>
        <ecNumber>5.4.2.8</ecNumber>
    </recommendedName>
</protein>
<sequence>MNNEIVKKWLSSDNVPQTDKDIISKMKNEELELAFSNAPLSFGTAGIRAKMAPGTQFLNKITYYQMATGYGKFLKNKFSNQNISVIVAHDNRNNGIDFSIDVTNILTSLELEFICLKIINLLLRQLFSYAIRKLNAQGAVIVTASHNPKEDNGFKIYNETGAQVLPDDGLKVVELMPNVFEMIDLKVANDDSLITYLNEDIFRQYYEDCKQALIKTNINESKEFSIVFSGQHGTACKRLPEFLKLLGYKNIILVEEQCIFDGNFSNTPTPNPENRAAWDLSIEYADKNNANVIIQVDPDADRFALGVRYKNSWRFLSGNQMGIIYTDYILKNKTFTKKPYIVSSYVSTNLIDRIIKEYHGEVYRVGTGFKWVGDKINKIKDSEEFVVGFEEAVGALNSTINRDKDAYQAAALALEIYNECLKNNINIIDHLEKNIYGKYGIIHNDTISFTFVENNWKELVKKSLDKILKYSEKTIGNRTITSIKYNEVGGCYDWILDGDSWLRFRMSGTEPKFKVYYNLYGENLNALSQEAKTINDQIKTLLNL</sequence>
<gene>
    <name type="primary">manB</name>
    <name type="synonym">cpsG</name>
</gene>
<name>MANB_MYCPI</name>